<sequence length="268" mass="28148">MQSSRSVSTEAFVRLVVDIGNTTTTLAVFTGETEPSVESVQSTLFGEPKAVAELFLSLAHRHGTPQAVAVCSVVPAAAASCSAQLESLFSVPVVTIAASLRLPFQLDYATPHTFGADRIALCAWSRHLFGDCPVIAVDIGTAITFDVLDAEGNYRGGLIMPGIDMMAGALNSRTAQLPLVDIDKPESLLGRSTIECIRNGIFWGAVRQIAGLIDAIGAELPGESKAAPAEVLVTGGNSRIIAPEIASITHLDELAVLRGIDLLLRLNS</sequence>
<dbReference type="EC" id="2.7.1.33" evidence="1"/>
<dbReference type="EMBL" id="CP001099">
    <property type="protein sequence ID" value="ACF11174.1"/>
    <property type="molecule type" value="Genomic_DNA"/>
</dbReference>
<dbReference type="RefSeq" id="WP_012502007.1">
    <property type="nucleotide sequence ID" value="NC_011027.1"/>
</dbReference>
<dbReference type="SMR" id="B3QMM1"/>
<dbReference type="STRING" id="517417.Cpar_0757"/>
<dbReference type="KEGG" id="cpc:Cpar_0757"/>
<dbReference type="eggNOG" id="COG1521">
    <property type="taxonomic scope" value="Bacteria"/>
</dbReference>
<dbReference type="HOGENOM" id="CLU_066627_1_0_10"/>
<dbReference type="OrthoDB" id="9804707at2"/>
<dbReference type="UniPathway" id="UPA00241">
    <property type="reaction ID" value="UER00352"/>
</dbReference>
<dbReference type="Proteomes" id="UP000008811">
    <property type="component" value="Chromosome"/>
</dbReference>
<dbReference type="GO" id="GO:0005737">
    <property type="term" value="C:cytoplasm"/>
    <property type="evidence" value="ECO:0007669"/>
    <property type="project" value="UniProtKB-SubCell"/>
</dbReference>
<dbReference type="GO" id="GO:0005524">
    <property type="term" value="F:ATP binding"/>
    <property type="evidence" value="ECO:0007669"/>
    <property type="project" value="UniProtKB-UniRule"/>
</dbReference>
<dbReference type="GO" id="GO:0046872">
    <property type="term" value="F:metal ion binding"/>
    <property type="evidence" value="ECO:0007669"/>
    <property type="project" value="UniProtKB-KW"/>
</dbReference>
<dbReference type="GO" id="GO:0004594">
    <property type="term" value="F:pantothenate kinase activity"/>
    <property type="evidence" value="ECO:0007669"/>
    <property type="project" value="UniProtKB-UniRule"/>
</dbReference>
<dbReference type="GO" id="GO:0015937">
    <property type="term" value="P:coenzyme A biosynthetic process"/>
    <property type="evidence" value="ECO:0007669"/>
    <property type="project" value="UniProtKB-UniRule"/>
</dbReference>
<dbReference type="CDD" id="cd24015">
    <property type="entry name" value="ASKHA_NBD_PanK-III"/>
    <property type="match status" value="1"/>
</dbReference>
<dbReference type="Gene3D" id="3.30.420.40">
    <property type="match status" value="2"/>
</dbReference>
<dbReference type="HAMAP" id="MF_01274">
    <property type="entry name" value="Pantothen_kinase_3"/>
    <property type="match status" value="1"/>
</dbReference>
<dbReference type="InterPro" id="IPR043129">
    <property type="entry name" value="ATPase_NBD"/>
</dbReference>
<dbReference type="InterPro" id="IPR004619">
    <property type="entry name" value="Type_III_PanK"/>
</dbReference>
<dbReference type="NCBIfam" id="TIGR00671">
    <property type="entry name" value="baf"/>
    <property type="match status" value="1"/>
</dbReference>
<dbReference type="NCBIfam" id="NF009852">
    <property type="entry name" value="PRK13320.1-4"/>
    <property type="match status" value="1"/>
</dbReference>
<dbReference type="PANTHER" id="PTHR34265">
    <property type="entry name" value="TYPE III PANTOTHENATE KINASE"/>
    <property type="match status" value="1"/>
</dbReference>
<dbReference type="PANTHER" id="PTHR34265:SF1">
    <property type="entry name" value="TYPE III PANTOTHENATE KINASE"/>
    <property type="match status" value="1"/>
</dbReference>
<dbReference type="Pfam" id="PF03309">
    <property type="entry name" value="Pan_kinase"/>
    <property type="match status" value="1"/>
</dbReference>
<dbReference type="SUPFAM" id="SSF53067">
    <property type="entry name" value="Actin-like ATPase domain"/>
    <property type="match status" value="2"/>
</dbReference>
<name>COAX_CHLP8</name>
<comment type="function">
    <text evidence="1">Catalyzes the phosphorylation of pantothenate (Pan), the first step in CoA biosynthesis.</text>
</comment>
<comment type="catalytic activity">
    <reaction evidence="1">
        <text>(R)-pantothenate + ATP = (R)-4'-phosphopantothenate + ADP + H(+)</text>
        <dbReference type="Rhea" id="RHEA:16373"/>
        <dbReference type="ChEBI" id="CHEBI:10986"/>
        <dbReference type="ChEBI" id="CHEBI:15378"/>
        <dbReference type="ChEBI" id="CHEBI:29032"/>
        <dbReference type="ChEBI" id="CHEBI:30616"/>
        <dbReference type="ChEBI" id="CHEBI:456216"/>
        <dbReference type="EC" id="2.7.1.33"/>
    </reaction>
</comment>
<comment type="cofactor">
    <cofactor evidence="1">
        <name>NH4(+)</name>
        <dbReference type="ChEBI" id="CHEBI:28938"/>
    </cofactor>
    <cofactor evidence="1">
        <name>K(+)</name>
        <dbReference type="ChEBI" id="CHEBI:29103"/>
    </cofactor>
    <text evidence="1">A monovalent cation. Ammonium or potassium.</text>
</comment>
<comment type="pathway">
    <text evidence="1">Cofactor biosynthesis; coenzyme A biosynthesis; CoA from (R)-pantothenate: step 1/5.</text>
</comment>
<comment type="subunit">
    <text evidence="1">Homodimer.</text>
</comment>
<comment type="subcellular location">
    <subcellularLocation>
        <location evidence="1">Cytoplasm</location>
    </subcellularLocation>
</comment>
<comment type="similarity">
    <text evidence="1">Belongs to the type III pantothenate kinase family.</text>
</comment>
<feature type="chain" id="PRO_1000140232" description="Type III pantothenate kinase">
    <location>
        <begin position="1"/>
        <end position="268"/>
    </location>
</feature>
<feature type="active site" description="Proton acceptor" evidence="1">
    <location>
        <position position="117"/>
    </location>
</feature>
<feature type="binding site" evidence="1">
    <location>
        <begin position="18"/>
        <end position="25"/>
    </location>
    <ligand>
        <name>ATP</name>
        <dbReference type="ChEBI" id="CHEBI:30616"/>
    </ligand>
</feature>
<feature type="binding site" evidence="1">
    <location>
        <position position="108"/>
    </location>
    <ligand>
        <name>substrate</name>
    </ligand>
</feature>
<feature type="binding site" evidence="1">
    <location>
        <begin position="115"/>
        <end position="118"/>
    </location>
    <ligand>
        <name>substrate</name>
    </ligand>
</feature>
<feature type="binding site" evidence="1">
    <location>
        <position position="138"/>
    </location>
    <ligand>
        <name>K(+)</name>
        <dbReference type="ChEBI" id="CHEBI:29103"/>
    </ligand>
</feature>
<feature type="binding site" evidence="1">
    <location>
        <position position="141"/>
    </location>
    <ligand>
        <name>ATP</name>
        <dbReference type="ChEBI" id="CHEBI:30616"/>
    </ligand>
</feature>
<feature type="binding site" evidence="1">
    <location>
        <position position="193"/>
    </location>
    <ligand>
        <name>substrate</name>
    </ligand>
</feature>
<evidence type="ECO:0000255" key="1">
    <source>
        <dbReference type="HAMAP-Rule" id="MF_01274"/>
    </source>
</evidence>
<reference key="1">
    <citation type="submission" date="2008-06" db="EMBL/GenBank/DDBJ databases">
        <title>Complete sequence of Chlorobaculum parvum NCIB 8327.</title>
        <authorList>
            <consortium name="US DOE Joint Genome Institute"/>
            <person name="Lucas S."/>
            <person name="Copeland A."/>
            <person name="Lapidus A."/>
            <person name="Glavina del Rio T."/>
            <person name="Dalin E."/>
            <person name="Tice H."/>
            <person name="Bruce D."/>
            <person name="Goodwin L."/>
            <person name="Pitluck S."/>
            <person name="Schmutz J."/>
            <person name="Larimer F."/>
            <person name="Land M."/>
            <person name="Hauser L."/>
            <person name="Kyrpides N."/>
            <person name="Mikhailova N."/>
            <person name="Zhao F."/>
            <person name="Li T."/>
            <person name="Liu Z."/>
            <person name="Overmann J."/>
            <person name="Bryant D.A."/>
            <person name="Richardson P."/>
        </authorList>
    </citation>
    <scope>NUCLEOTIDE SEQUENCE [LARGE SCALE GENOMIC DNA]</scope>
    <source>
        <strain>DSM 263 / NCIMB 8327</strain>
    </source>
</reference>
<protein>
    <recommendedName>
        <fullName evidence="1">Type III pantothenate kinase</fullName>
        <ecNumber evidence="1">2.7.1.33</ecNumber>
    </recommendedName>
    <alternativeName>
        <fullName evidence="1">PanK-III</fullName>
    </alternativeName>
    <alternativeName>
        <fullName evidence="1">Pantothenic acid kinase</fullName>
    </alternativeName>
</protein>
<accession>B3QMM1</accession>
<organism>
    <name type="scientific">Chlorobaculum parvum (strain DSM 263 / NCIMB 8327)</name>
    <name type="common">Chlorobium vibrioforme subsp. thiosulfatophilum</name>
    <dbReference type="NCBI Taxonomy" id="517417"/>
    <lineage>
        <taxon>Bacteria</taxon>
        <taxon>Pseudomonadati</taxon>
        <taxon>Chlorobiota</taxon>
        <taxon>Chlorobiia</taxon>
        <taxon>Chlorobiales</taxon>
        <taxon>Chlorobiaceae</taxon>
        <taxon>Chlorobaculum</taxon>
    </lineage>
</organism>
<gene>
    <name evidence="1" type="primary">coaX</name>
    <name type="ordered locus">Cpar_0757</name>
</gene>
<keyword id="KW-0067">ATP-binding</keyword>
<keyword id="KW-0173">Coenzyme A biosynthesis</keyword>
<keyword id="KW-0963">Cytoplasm</keyword>
<keyword id="KW-0418">Kinase</keyword>
<keyword id="KW-0479">Metal-binding</keyword>
<keyword id="KW-0547">Nucleotide-binding</keyword>
<keyword id="KW-0630">Potassium</keyword>
<keyword id="KW-0808">Transferase</keyword>
<proteinExistence type="inferred from homology"/>